<name>DI3L1_RAT</name>
<organism>
    <name type="scientific">Rattus norvegicus</name>
    <name type="common">Rat</name>
    <dbReference type="NCBI Taxonomy" id="10116"/>
    <lineage>
        <taxon>Eukaryota</taxon>
        <taxon>Metazoa</taxon>
        <taxon>Chordata</taxon>
        <taxon>Craniata</taxon>
        <taxon>Vertebrata</taxon>
        <taxon>Euteleostomi</taxon>
        <taxon>Mammalia</taxon>
        <taxon>Eutheria</taxon>
        <taxon>Euarchontoglires</taxon>
        <taxon>Glires</taxon>
        <taxon>Rodentia</taxon>
        <taxon>Myomorpha</taxon>
        <taxon>Muroidea</taxon>
        <taxon>Muridae</taxon>
        <taxon>Murinae</taxon>
        <taxon>Rattus</taxon>
    </lineage>
</organism>
<keyword id="KW-0963">Cytoplasm</keyword>
<keyword id="KW-0269">Exonuclease</keyword>
<keyword id="KW-0271">Exosome</keyword>
<keyword id="KW-0378">Hydrolase</keyword>
<keyword id="KW-0460">Magnesium</keyword>
<keyword id="KW-0540">Nuclease</keyword>
<keyword id="KW-0597">Phosphoprotein</keyword>
<keyword id="KW-1185">Reference proteome</keyword>
<keyword id="KW-0694">RNA-binding</keyword>
<proteinExistence type="evidence at transcript level"/>
<comment type="function">
    <text evidence="1">Catalytic component of the RNA exosome complex which has 3'-&gt;5' exoribonuclease activity and participates in a multitude of cellular RNA processing and degradation events. In the cytoplasm, the RNA exosome complex is involved in general mRNA turnover and specifically degrades inherently unstable mRNAs containing AU-rich elements (AREs) within their 3' untranslated regions, and in RNA surveillance pathways, preventing translation of aberrant mRNAs. It seems to be involved in degradation of histone mRNA.</text>
</comment>
<comment type="catalytic activity">
    <reaction evidence="1">
        <text>Exonucleolytic cleavage in the 3'- to 5'-direction to yield nucleoside 5'-phosphates.</text>
        <dbReference type="EC" id="3.1.13.1"/>
    </reaction>
</comment>
<comment type="cofactor">
    <cofactor evidence="1">
        <name>Mg(2+)</name>
        <dbReference type="ChEBI" id="CHEBI:18420"/>
    </cofactor>
</comment>
<comment type="subunit">
    <text evidence="1">Component of the RNA exosome complex. The catalytically inactive RNA exosome core (Exo-9) complex is believed to associate with catalytic subunits EXOSC10, and DIS3 or DIS3L in cytoplasmic- and nuclear-specific RNA exosome complex forms (By similarity).</text>
</comment>
<comment type="subcellular location">
    <subcellularLocation>
        <location evidence="1">Cytoplasm</location>
    </subcellularLocation>
</comment>
<comment type="similarity">
    <text evidence="4">Belongs to the RNR ribonuclease family.</text>
</comment>
<comment type="sequence caution" evidence="4">
    <conflict type="erroneous initiation">
        <sequence resource="EMBL-CDS" id="AAH85932"/>
    </conflict>
    <text>Truncated N-terminus.</text>
</comment>
<sequence>MLQKREKVLLLRTFQGRTLRIVREHYLRPSVPCNSPLCPQPATCRNDGKLLSAEVTHYVIPDWKVVQDYLEVLEFPELKGIIFMQTACQAVQHQRGRRQYNKLRNLLKDARHDCVLFANEFQQHCYLPREKGEAMEKWQTRSIYNSAVWYYHHCEDRMPIVMVTEDEEAIQQYGSETEGVFVISFKNYLDNFWPDLKAAHELCDSIIQSRRERESESQETHGKEYPEHLPLEVLEAGIKSGRYIQGILNVNKHRAQIEAFVRLQGASSKDSGLVSDILIHGSKARNRSIHGDVVVVELLPKSEWKGRTAALCENDSEDKASGESPSEPMPTGRVVGILQKNWRDYVVTFPSKEEVQSQGKNAQKILVTPWDYRIPKIRISTQQAEALQDFRVVVRIDSWETTSVYPNGHFVRVLGRIGDLEGEIATILVENSINVVPFSEAQMCEMPVNTAENPWKVSPKEEQERRDLRSTHLVFSIDPKGCEDVDDALSVRTLNNGNLELGVHIADVTHFVAPNSYIDVEARTRATTYYLADRRYDMLPSILSADLCSLLGGVDRYAVSVMWELDKTSYEIKKVWYGRTIIRSAYKLFYEAAQELLDGNFSIVDDIPEFKTLEEQNRQAKLEELVWAIGKLTDIARHIRAKRDRCGALELEGVEVRVQLDDKKNIHDLIPKQPLEVHETVAECMILANHWVAKKIWESFPHQALLRQHPPPHQEFFSELRECAKAKGFFIDTRSNKTLADSLDSANDPSDPLVNKLLRSMATQAMSNALYFSTGSCAEEEFHHYGLALDKYTHFTSPIRRYSDIVVHRLLMAAISKDKKVEIKENLFSNKNLEELCRHINNRNRAAQRSQKQSTELFQCMYFKDRDPETEERCVVDGIIYSIRTNGVLVFIPRFGIKGAAYLKNKDGLVISCGPEGSSEWKPGSLQRSQNKIISTTAGGQSVTFHLFDHVTVRISVQPSRCHSDMIRLEIVSNKPYMMPNTELCHQSSLLLKSELVKEVTRSVEEAQLAQEVKGKVIEEEHQEYRQTKGRSLYTLLEEIRDLALLDVSDSYAM</sequence>
<protein>
    <recommendedName>
        <fullName>DIS3-like exonuclease 1</fullName>
        <ecNumber evidence="1">3.1.13.1</ecNumber>
    </recommendedName>
</protein>
<evidence type="ECO:0000250" key="1">
    <source>
        <dbReference type="UniProtKB" id="Q8TF46"/>
    </source>
</evidence>
<evidence type="ECO:0000255" key="2"/>
<evidence type="ECO:0000256" key="3">
    <source>
        <dbReference type="SAM" id="MobiDB-lite"/>
    </source>
</evidence>
<evidence type="ECO:0000305" key="4"/>
<accession>Q5U2P0</accession>
<dbReference type="EC" id="3.1.13.1" evidence="1"/>
<dbReference type="EMBL" id="BC085932">
    <property type="protein sequence ID" value="AAH85932.1"/>
    <property type="status" value="ALT_INIT"/>
    <property type="molecule type" value="mRNA"/>
</dbReference>
<dbReference type="RefSeq" id="NP_001008381.2">
    <property type="nucleotide sequence ID" value="NM_001008380.2"/>
</dbReference>
<dbReference type="RefSeq" id="XP_006243323.1">
    <property type="nucleotide sequence ID" value="XM_006243261.2"/>
</dbReference>
<dbReference type="RefSeq" id="XP_006243324.1">
    <property type="nucleotide sequence ID" value="XM_006243262.3"/>
</dbReference>
<dbReference type="RefSeq" id="XP_006243325.1">
    <property type="nucleotide sequence ID" value="XM_006243263.3"/>
</dbReference>
<dbReference type="SMR" id="Q5U2P0"/>
<dbReference type="FunCoup" id="Q5U2P0">
    <property type="interactions" value="202"/>
</dbReference>
<dbReference type="STRING" id="10116.ENSRNOP00000014071"/>
<dbReference type="PhosphoSitePlus" id="Q5U2P0"/>
<dbReference type="jPOST" id="Q5U2P0"/>
<dbReference type="PaxDb" id="10116-ENSRNOP00000014071"/>
<dbReference type="Ensembl" id="ENSRNOT00000014071.7">
    <property type="protein sequence ID" value="ENSRNOP00000014071.5"/>
    <property type="gene ID" value="ENSRNOG00000010537.7"/>
</dbReference>
<dbReference type="GeneID" id="363077"/>
<dbReference type="KEGG" id="rno:363077"/>
<dbReference type="UCSC" id="RGD:1308959">
    <property type="organism name" value="rat"/>
</dbReference>
<dbReference type="AGR" id="RGD:1308959"/>
<dbReference type="CTD" id="115752"/>
<dbReference type="RGD" id="1308959">
    <property type="gene designation" value="Dis3l"/>
</dbReference>
<dbReference type="eggNOG" id="KOG2102">
    <property type="taxonomic scope" value="Eukaryota"/>
</dbReference>
<dbReference type="GeneTree" id="ENSGT00530000063106"/>
<dbReference type="HOGENOM" id="CLU_002333_5_0_1"/>
<dbReference type="InParanoid" id="Q5U2P0"/>
<dbReference type="OMA" id="VIRIDGW"/>
<dbReference type="OrthoDB" id="372421at2759"/>
<dbReference type="PhylomeDB" id="Q5U2P0"/>
<dbReference type="TreeFam" id="TF105755"/>
<dbReference type="PRO" id="PR:Q5U2P0"/>
<dbReference type="Proteomes" id="UP000002494">
    <property type="component" value="Chromosome 8"/>
</dbReference>
<dbReference type="Bgee" id="ENSRNOG00000010537">
    <property type="expression patterns" value="Expressed in testis and 20 other cell types or tissues"/>
</dbReference>
<dbReference type="GO" id="GO:0005813">
    <property type="term" value="C:centrosome"/>
    <property type="evidence" value="ECO:0007669"/>
    <property type="project" value="Ensembl"/>
</dbReference>
<dbReference type="GO" id="GO:0036064">
    <property type="term" value="C:ciliary basal body"/>
    <property type="evidence" value="ECO:0007669"/>
    <property type="project" value="Ensembl"/>
</dbReference>
<dbReference type="GO" id="GO:0000177">
    <property type="term" value="C:cytoplasmic exosome (RNase complex)"/>
    <property type="evidence" value="ECO:0000250"/>
    <property type="project" value="UniProtKB"/>
</dbReference>
<dbReference type="GO" id="GO:0005829">
    <property type="term" value="C:cytosol"/>
    <property type="evidence" value="ECO:0000266"/>
    <property type="project" value="RGD"/>
</dbReference>
<dbReference type="GO" id="GO:0005886">
    <property type="term" value="C:plasma membrane"/>
    <property type="evidence" value="ECO:0007669"/>
    <property type="project" value="Ensembl"/>
</dbReference>
<dbReference type="GO" id="GO:0000175">
    <property type="term" value="F:3'-5'-RNA exonuclease activity"/>
    <property type="evidence" value="ECO:0000250"/>
    <property type="project" value="UniProtKB"/>
</dbReference>
<dbReference type="GO" id="GO:0019899">
    <property type="term" value="F:enzyme binding"/>
    <property type="evidence" value="ECO:0000266"/>
    <property type="project" value="RGD"/>
</dbReference>
<dbReference type="GO" id="GO:0008859">
    <property type="term" value="F:exoribonuclease II activity"/>
    <property type="evidence" value="ECO:0000250"/>
    <property type="project" value="UniProtKB"/>
</dbReference>
<dbReference type="GO" id="GO:0003723">
    <property type="term" value="F:RNA binding"/>
    <property type="evidence" value="ECO:0007669"/>
    <property type="project" value="UniProtKB-KW"/>
</dbReference>
<dbReference type="GO" id="GO:0006402">
    <property type="term" value="P:mRNA catabolic process"/>
    <property type="evidence" value="ECO:0000318"/>
    <property type="project" value="GO_Central"/>
</dbReference>
<dbReference type="GO" id="GO:0006401">
    <property type="term" value="P:RNA catabolic process"/>
    <property type="evidence" value="ECO:0000266"/>
    <property type="project" value="RGD"/>
</dbReference>
<dbReference type="GO" id="GO:0006396">
    <property type="term" value="P:RNA processing"/>
    <property type="evidence" value="ECO:0000266"/>
    <property type="project" value="RGD"/>
</dbReference>
<dbReference type="GO" id="GO:0016075">
    <property type="term" value="P:rRNA catabolic process"/>
    <property type="evidence" value="ECO:0000266"/>
    <property type="project" value="RGD"/>
</dbReference>
<dbReference type="CDD" id="cd09862">
    <property type="entry name" value="PIN_Rrp44-like"/>
    <property type="match status" value="1"/>
</dbReference>
<dbReference type="FunFam" id="2.40.50.140:FF:000143">
    <property type="entry name" value="DIS3-like exonuclease 1 isoform X1"/>
    <property type="match status" value="1"/>
</dbReference>
<dbReference type="FunFam" id="2.40.50.690:FF:000004">
    <property type="entry name" value="DIS3-like exonuclease 1 isoform X1"/>
    <property type="match status" value="1"/>
</dbReference>
<dbReference type="FunFam" id="3.40.50.1010:FF:000021">
    <property type="entry name" value="DIS3-like exonuclease 1 isoform X1"/>
    <property type="match status" value="1"/>
</dbReference>
<dbReference type="FunFam" id="2.40.50.700:FF:000004">
    <property type="entry name" value="Exosome complex exonuclease RRP44 homolog A"/>
    <property type="match status" value="1"/>
</dbReference>
<dbReference type="Gene3D" id="2.40.50.690">
    <property type="match status" value="1"/>
</dbReference>
<dbReference type="Gene3D" id="2.40.50.700">
    <property type="match status" value="1"/>
</dbReference>
<dbReference type="Gene3D" id="3.40.50.1010">
    <property type="entry name" value="5'-nuclease"/>
    <property type="match status" value="1"/>
</dbReference>
<dbReference type="Gene3D" id="2.40.50.140">
    <property type="entry name" value="Nucleic acid-binding proteins"/>
    <property type="match status" value="1"/>
</dbReference>
<dbReference type="InterPro" id="IPR041505">
    <property type="entry name" value="Dis3_CSD2"/>
</dbReference>
<dbReference type="InterPro" id="IPR012340">
    <property type="entry name" value="NA-bd_OB-fold"/>
</dbReference>
<dbReference type="InterPro" id="IPR001900">
    <property type="entry name" value="RNase_II/R"/>
</dbReference>
<dbReference type="InterPro" id="IPR022966">
    <property type="entry name" value="RNase_II/R_CS"/>
</dbReference>
<dbReference type="InterPro" id="IPR050180">
    <property type="entry name" value="RNR_Ribonuclease"/>
</dbReference>
<dbReference type="InterPro" id="IPR033771">
    <property type="entry name" value="Rrp44_CSD1"/>
</dbReference>
<dbReference type="InterPro" id="IPR033770">
    <property type="entry name" value="RRP44_S1"/>
</dbReference>
<dbReference type="PANTHER" id="PTHR23355:SF30">
    <property type="entry name" value="DIS3-LIKE EXONUCLEASE 1"/>
    <property type="match status" value="1"/>
</dbReference>
<dbReference type="PANTHER" id="PTHR23355">
    <property type="entry name" value="RIBONUCLEASE"/>
    <property type="match status" value="1"/>
</dbReference>
<dbReference type="Pfam" id="PF17849">
    <property type="entry name" value="OB_Dis3"/>
    <property type="match status" value="1"/>
</dbReference>
<dbReference type="Pfam" id="PF00773">
    <property type="entry name" value="RNB"/>
    <property type="match status" value="1"/>
</dbReference>
<dbReference type="Pfam" id="PF17216">
    <property type="entry name" value="Rrp44_CSD1"/>
    <property type="match status" value="1"/>
</dbReference>
<dbReference type="Pfam" id="PF17215">
    <property type="entry name" value="Rrp44_S1"/>
    <property type="match status" value="1"/>
</dbReference>
<dbReference type="SMART" id="SM00955">
    <property type="entry name" value="RNB"/>
    <property type="match status" value="1"/>
</dbReference>
<dbReference type="SUPFAM" id="SSF50249">
    <property type="entry name" value="Nucleic acid-binding proteins"/>
    <property type="match status" value="3"/>
</dbReference>
<dbReference type="PROSITE" id="PS01175">
    <property type="entry name" value="RIBONUCLEASE_II"/>
    <property type="match status" value="1"/>
</dbReference>
<reference key="1">
    <citation type="journal article" date="2004" name="Genome Res.">
        <title>The status, quality, and expansion of the NIH full-length cDNA project: the Mammalian Gene Collection (MGC).</title>
        <authorList>
            <consortium name="The MGC Project Team"/>
        </authorList>
    </citation>
    <scope>NUCLEOTIDE SEQUENCE [LARGE SCALE MRNA]</scope>
    <source>
        <tissue>Testis</tissue>
    </source>
</reference>
<feature type="chain" id="PRO_0000314813" description="DIS3-like exonuclease 1">
    <location>
        <begin position="1"/>
        <end position="1054"/>
    </location>
</feature>
<feature type="domain" description="CSD1" evidence="2">
    <location>
        <begin position="236"/>
        <end position="313"/>
    </location>
</feature>
<feature type="domain" description="CSD2" evidence="2">
    <location>
        <begin position="365"/>
        <end position="431"/>
    </location>
</feature>
<feature type="domain" description="RNB" evidence="2">
    <location>
        <begin position="465"/>
        <end position="816"/>
    </location>
</feature>
<feature type="region of interest" description="Disordered" evidence="3">
    <location>
        <begin position="313"/>
        <end position="332"/>
    </location>
</feature>
<feature type="modified residue" description="Phosphoserine" evidence="1">
    <location>
        <position position="989"/>
    </location>
</feature>
<gene>
    <name type="primary">Dis3l</name>
</gene>